<comment type="function">
    <text evidence="1">Binds to 23S rRNA. Forms part of two intersubunit bridges in the 70S ribosome.</text>
</comment>
<comment type="subunit">
    <text evidence="1">Part of the 50S ribosomal subunit. Forms a cluster with proteins L3 and L19. In the 70S ribosome, L14 and L19 interact and together make contacts with the 16S rRNA in bridges B5 and B8.</text>
</comment>
<comment type="similarity">
    <text evidence="1">Belongs to the universal ribosomal protein uL14 family.</text>
</comment>
<dbReference type="EMBL" id="CU928162">
    <property type="protein sequence ID" value="CAR10112.2"/>
    <property type="molecule type" value="Genomic_DNA"/>
</dbReference>
<dbReference type="RefSeq" id="WP_000613955.1">
    <property type="nucleotide sequence ID" value="NC_011745.1"/>
</dbReference>
<dbReference type="SMR" id="B7N194"/>
<dbReference type="GeneID" id="93778677"/>
<dbReference type="KEGG" id="ecq:ECED1_3973"/>
<dbReference type="HOGENOM" id="CLU_095071_2_1_6"/>
<dbReference type="Proteomes" id="UP000000748">
    <property type="component" value="Chromosome"/>
</dbReference>
<dbReference type="GO" id="GO:0022625">
    <property type="term" value="C:cytosolic large ribosomal subunit"/>
    <property type="evidence" value="ECO:0007669"/>
    <property type="project" value="TreeGrafter"/>
</dbReference>
<dbReference type="GO" id="GO:0070180">
    <property type="term" value="F:large ribosomal subunit rRNA binding"/>
    <property type="evidence" value="ECO:0007669"/>
    <property type="project" value="TreeGrafter"/>
</dbReference>
<dbReference type="GO" id="GO:0003735">
    <property type="term" value="F:structural constituent of ribosome"/>
    <property type="evidence" value="ECO:0007669"/>
    <property type="project" value="InterPro"/>
</dbReference>
<dbReference type="GO" id="GO:0006412">
    <property type="term" value="P:translation"/>
    <property type="evidence" value="ECO:0007669"/>
    <property type="project" value="UniProtKB-UniRule"/>
</dbReference>
<dbReference type="CDD" id="cd00337">
    <property type="entry name" value="Ribosomal_uL14"/>
    <property type="match status" value="1"/>
</dbReference>
<dbReference type="FunFam" id="2.40.150.20:FF:000001">
    <property type="entry name" value="50S ribosomal protein L14"/>
    <property type="match status" value="1"/>
</dbReference>
<dbReference type="Gene3D" id="2.40.150.20">
    <property type="entry name" value="Ribosomal protein L14"/>
    <property type="match status" value="1"/>
</dbReference>
<dbReference type="HAMAP" id="MF_01367">
    <property type="entry name" value="Ribosomal_uL14"/>
    <property type="match status" value="1"/>
</dbReference>
<dbReference type="InterPro" id="IPR000218">
    <property type="entry name" value="Ribosomal_uL14"/>
</dbReference>
<dbReference type="InterPro" id="IPR005745">
    <property type="entry name" value="Ribosomal_uL14_bac-type"/>
</dbReference>
<dbReference type="InterPro" id="IPR019972">
    <property type="entry name" value="Ribosomal_uL14_CS"/>
</dbReference>
<dbReference type="InterPro" id="IPR036853">
    <property type="entry name" value="Ribosomal_uL14_sf"/>
</dbReference>
<dbReference type="NCBIfam" id="TIGR01067">
    <property type="entry name" value="rplN_bact"/>
    <property type="match status" value="1"/>
</dbReference>
<dbReference type="PANTHER" id="PTHR11761">
    <property type="entry name" value="50S/60S RIBOSOMAL PROTEIN L14/L23"/>
    <property type="match status" value="1"/>
</dbReference>
<dbReference type="PANTHER" id="PTHR11761:SF3">
    <property type="entry name" value="LARGE RIBOSOMAL SUBUNIT PROTEIN UL14M"/>
    <property type="match status" value="1"/>
</dbReference>
<dbReference type="Pfam" id="PF00238">
    <property type="entry name" value="Ribosomal_L14"/>
    <property type="match status" value="1"/>
</dbReference>
<dbReference type="SMART" id="SM01374">
    <property type="entry name" value="Ribosomal_L14"/>
    <property type="match status" value="1"/>
</dbReference>
<dbReference type="SUPFAM" id="SSF50193">
    <property type="entry name" value="Ribosomal protein L14"/>
    <property type="match status" value="1"/>
</dbReference>
<dbReference type="PROSITE" id="PS00049">
    <property type="entry name" value="RIBOSOMAL_L14"/>
    <property type="match status" value="1"/>
</dbReference>
<keyword id="KW-0687">Ribonucleoprotein</keyword>
<keyword id="KW-0689">Ribosomal protein</keyword>
<keyword id="KW-0694">RNA-binding</keyword>
<keyword id="KW-0699">rRNA-binding</keyword>
<gene>
    <name evidence="1" type="primary">rplN</name>
    <name type="ordered locus">ECED1_3973</name>
</gene>
<protein>
    <recommendedName>
        <fullName evidence="1">Large ribosomal subunit protein uL14</fullName>
    </recommendedName>
    <alternativeName>
        <fullName evidence="2">50S ribosomal protein L14</fullName>
    </alternativeName>
</protein>
<reference key="1">
    <citation type="journal article" date="2009" name="PLoS Genet.">
        <title>Organised genome dynamics in the Escherichia coli species results in highly diverse adaptive paths.</title>
        <authorList>
            <person name="Touchon M."/>
            <person name="Hoede C."/>
            <person name="Tenaillon O."/>
            <person name="Barbe V."/>
            <person name="Baeriswyl S."/>
            <person name="Bidet P."/>
            <person name="Bingen E."/>
            <person name="Bonacorsi S."/>
            <person name="Bouchier C."/>
            <person name="Bouvet O."/>
            <person name="Calteau A."/>
            <person name="Chiapello H."/>
            <person name="Clermont O."/>
            <person name="Cruveiller S."/>
            <person name="Danchin A."/>
            <person name="Diard M."/>
            <person name="Dossat C."/>
            <person name="Karoui M.E."/>
            <person name="Frapy E."/>
            <person name="Garry L."/>
            <person name="Ghigo J.M."/>
            <person name="Gilles A.M."/>
            <person name="Johnson J."/>
            <person name="Le Bouguenec C."/>
            <person name="Lescat M."/>
            <person name="Mangenot S."/>
            <person name="Martinez-Jehanne V."/>
            <person name="Matic I."/>
            <person name="Nassif X."/>
            <person name="Oztas S."/>
            <person name="Petit M.A."/>
            <person name="Pichon C."/>
            <person name="Rouy Z."/>
            <person name="Ruf C.S."/>
            <person name="Schneider D."/>
            <person name="Tourret J."/>
            <person name="Vacherie B."/>
            <person name="Vallenet D."/>
            <person name="Medigue C."/>
            <person name="Rocha E.P.C."/>
            <person name="Denamur E."/>
        </authorList>
    </citation>
    <scope>NUCLEOTIDE SEQUENCE [LARGE SCALE GENOMIC DNA]</scope>
    <source>
        <strain>ED1a</strain>
    </source>
</reference>
<accession>B7N194</accession>
<proteinExistence type="inferred from homology"/>
<feature type="chain" id="PRO_1000166921" description="Large ribosomal subunit protein uL14">
    <location>
        <begin position="1"/>
        <end position="123"/>
    </location>
</feature>
<organism>
    <name type="scientific">Escherichia coli O81 (strain ED1a)</name>
    <dbReference type="NCBI Taxonomy" id="585397"/>
    <lineage>
        <taxon>Bacteria</taxon>
        <taxon>Pseudomonadati</taxon>
        <taxon>Pseudomonadota</taxon>
        <taxon>Gammaproteobacteria</taxon>
        <taxon>Enterobacterales</taxon>
        <taxon>Enterobacteriaceae</taxon>
        <taxon>Escherichia</taxon>
    </lineage>
</organism>
<evidence type="ECO:0000255" key="1">
    <source>
        <dbReference type="HAMAP-Rule" id="MF_01367"/>
    </source>
</evidence>
<evidence type="ECO:0000305" key="2"/>
<sequence length="123" mass="13541">MIQEQTMLNVADNSGARRVMCIKVLGGSHRRYAGVGDIIKITIKEAIPRGKVKKGDVLKAVVVRTKKGVRRPDGSVIRFDGNACVLLNNNSEQPIGTRIFGPVTRELRSEKFMKIISLAPEVL</sequence>
<name>RL14_ECO81</name>